<gene>
    <name type="primary">UXT</name>
</gene>
<dbReference type="EMBL" id="BC108205">
    <property type="protein sequence ID" value="AAI08206.1"/>
    <property type="molecule type" value="mRNA"/>
</dbReference>
<dbReference type="RefSeq" id="NP_001032548.1">
    <property type="nucleotide sequence ID" value="NM_001037471.2"/>
</dbReference>
<dbReference type="SMR" id="Q32P97"/>
<dbReference type="FunCoup" id="Q32P97">
    <property type="interactions" value="2102"/>
</dbReference>
<dbReference type="IntAct" id="Q32P97">
    <property type="interactions" value="2"/>
</dbReference>
<dbReference type="STRING" id="9913.ENSBTAP00000030041"/>
<dbReference type="PaxDb" id="9913-ENSBTAP00000030041"/>
<dbReference type="GeneID" id="525680"/>
<dbReference type="KEGG" id="bta:525680"/>
<dbReference type="CTD" id="8409"/>
<dbReference type="VEuPathDB" id="HostDB:ENSBTAG00000015820"/>
<dbReference type="eggNOG" id="KOG3047">
    <property type="taxonomic scope" value="Eukaryota"/>
</dbReference>
<dbReference type="HOGENOM" id="CLU_121199_1_0_1"/>
<dbReference type="InParanoid" id="Q32P97"/>
<dbReference type="OMA" id="HMPDGYK"/>
<dbReference type="OrthoDB" id="433124at2759"/>
<dbReference type="TreeFam" id="TF323827"/>
<dbReference type="Proteomes" id="UP000009136">
    <property type="component" value="Chromosome X"/>
</dbReference>
<dbReference type="Bgee" id="ENSBTAG00000015820">
    <property type="expression patterns" value="Expressed in oocyte and 105 other cell types or tissues"/>
</dbReference>
<dbReference type="GO" id="GO:0005813">
    <property type="term" value="C:centrosome"/>
    <property type="evidence" value="ECO:0007669"/>
    <property type="project" value="UniProtKB-SubCell"/>
</dbReference>
<dbReference type="GO" id="GO:0000785">
    <property type="term" value="C:chromatin"/>
    <property type="evidence" value="ECO:0000318"/>
    <property type="project" value="GO_Central"/>
</dbReference>
<dbReference type="GO" id="GO:0005737">
    <property type="term" value="C:cytoplasm"/>
    <property type="evidence" value="ECO:0000250"/>
    <property type="project" value="UniProtKB"/>
</dbReference>
<dbReference type="GO" id="GO:0005829">
    <property type="term" value="C:cytosol"/>
    <property type="evidence" value="ECO:0007669"/>
    <property type="project" value="UniProtKB-ARBA"/>
</dbReference>
<dbReference type="GO" id="GO:0016592">
    <property type="term" value="C:mediator complex"/>
    <property type="evidence" value="ECO:0000318"/>
    <property type="project" value="GO_Central"/>
</dbReference>
<dbReference type="GO" id="GO:0005634">
    <property type="term" value="C:nucleus"/>
    <property type="evidence" value="ECO:0000250"/>
    <property type="project" value="UniProtKB"/>
</dbReference>
<dbReference type="GO" id="GO:0000922">
    <property type="term" value="C:spindle pole"/>
    <property type="evidence" value="ECO:0007669"/>
    <property type="project" value="UniProtKB-SubCell"/>
</dbReference>
<dbReference type="GO" id="GO:0003682">
    <property type="term" value="F:chromatin binding"/>
    <property type="evidence" value="ECO:0000250"/>
    <property type="project" value="UniProtKB"/>
</dbReference>
<dbReference type="GO" id="GO:0003714">
    <property type="term" value="F:transcription corepressor activity"/>
    <property type="evidence" value="ECO:0000250"/>
    <property type="project" value="UniProtKB"/>
</dbReference>
<dbReference type="GO" id="GO:0000122">
    <property type="term" value="P:negative regulation of transcription by RNA polymerase II"/>
    <property type="evidence" value="ECO:0000250"/>
    <property type="project" value="UniProtKB"/>
</dbReference>
<dbReference type="CDD" id="cd23158">
    <property type="entry name" value="Prefoldin_UXT"/>
    <property type="match status" value="1"/>
</dbReference>
<dbReference type="FunFam" id="1.10.287.370:FF:000007">
    <property type="entry name" value="UXT isoform 1"/>
    <property type="match status" value="1"/>
</dbReference>
<dbReference type="Gene3D" id="1.10.287.370">
    <property type="match status" value="1"/>
</dbReference>
<dbReference type="InterPro" id="IPR009053">
    <property type="entry name" value="Prefoldin"/>
</dbReference>
<dbReference type="InterPro" id="IPR004127">
    <property type="entry name" value="Prefoldin_subunit_alpha"/>
</dbReference>
<dbReference type="InterPro" id="IPR003994">
    <property type="entry name" value="UXT"/>
</dbReference>
<dbReference type="PANTHER" id="PTHR13345">
    <property type="entry name" value="MEDIATOR OF RNA POLYMERASE II TRANSCRIPTION SUBUNIT 10"/>
    <property type="match status" value="1"/>
</dbReference>
<dbReference type="PANTHER" id="PTHR13345:SF9">
    <property type="entry name" value="PROTEIN UXT"/>
    <property type="match status" value="1"/>
</dbReference>
<dbReference type="Pfam" id="PF02996">
    <property type="entry name" value="Prefoldin"/>
    <property type="match status" value="1"/>
</dbReference>
<dbReference type="PRINTS" id="PR01502">
    <property type="entry name" value="UXTPROTEIN"/>
</dbReference>
<dbReference type="SUPFAM" id="SSF46579">
    <property type="entry name" value="Prefoldin"/>
    <property type="match status" value="1"/>
</dbReference>
<name>UXT_BOVIN</name>
<comment type="function">
    <text evidence="1">Involved in gene transcription regulation. Acts in concert with the corepressor URI1 to regulate androgen receptor AR-mediated transcription. Together with URI1, associates with chromatin to the NKX3-1 promoter region. Negatively regulates the transcriptional activity of the estrogen receptor ESR1 by inducing its translocation into the cytoplasm. May act as nuclear chaperone that facilitates the formation of the NF-kappa-B enhanceosome and thus positively regulates NF-kappa-B transcription activity. Potential component of mitochondrial-associated LRPPRC, a multidomain organizer that potentially integrates mitochondria and the microtubular cytoskeleton with chromosome remodeling. Increasing concentrations of UXT contributes to progressive aggregation of mitochondria and cell death potentially through its association with LRPPRC. Suppresses cell transformation and it might mediate this function by interaction and inhibition of the biological activity of cell proliferation and survival stimulatory factors like MECOM.</text>
</comment>
<comment type="subunit">
    <text evidence="1">Homohexamer. Component of the PAQosome complex which is responsible for the biogenesis of several protein complexes and which consists of R2TP complex members RUVBL1, RUVBL2, RPAP3 and PIH1D1, URI complex members PFDN2, PFDN6, PDRG1, UXT and URI1 as well as ASDURF, POLR2E and DNAAF10/WDR92. Interacts with LRPPRC. Interacts with androgen receptor AR (via N-terminus). Interacts with estrogen receptor ESR1; the interaction relocalizes ESR1 to the cytoplasm. In the nucleus, interacts specifically with RELA (via RHD domain) and forms a dynamic complex with NF-kappa-B and is recruited to the NF-kappa-B enhanceosome upon stimulation. Interacts with MECOM. Interacts with URI1.</text>
</comment>
<comment type="subcellular location">
    <subcellularLocation>
        <location evidence="1">Cytoplasm</location>
    </subcellularLocation>
    <subcellularLocation>
        <location evidence="1">Nucleus</location>
    </subcellularLocation>
    <subcellularLocation>
        <location evidence="1">Cytoplasm</location>
        <location evidence="1">Cytoskeleton</location>
        <location evidence="1">Microtubule organizing center</location>
        <location evidence="1">Centrosome</location>
    </subcellularLocation>
    <subcellularLocation>
        <location evidence="1">Cytoplasm</location>
        <location evidence="1">Cytoskeleton</location>
        <location evidence="1">Spindle pole</location>
    </subcellularLocation>
    <text evidence="1">Predominantly localizes to the nucleus. Localizes to spindle pole during mitosis.</text>
</comment>
<comment type="similarity">
    <text evidence="2">Belongs to the UXT family.</text>
</comment>
<feature type="chain" id="PRO_0000330759" description="Protein UXT">
    <location>
        <begin position="1"/>
        <end position="156"/>
    </location>
</feature>
<accession>Q32P97</accession>
<evidence type="ECO:0000250" key="1">
    <source>
        <dbReference type="UniProtKB" id="Q9UBK9"/>
    </source>
</evidence>
<evidence type="ECO:0000305" key="2"/>
<reference key="1">
    <citation type="submission" date="2005-10" db="EMBL/GenBank/DDBJ databases">
        <authorList>
            <consortium name="NIH - Mammalian Gene Collection (MGC) project"/>
        </authorList>
    </citation>
    <scope>NUCLEOTIDE SEQUENCE [LARGE SCALE MRNA]</scope>
    <source>
        <strain>Crossbred X Angus</strain>
        <tissue>Liver</tissue>
    </source>
</reference>
<sequence>MATPPKRRAVEATAEKVLRYEAFISDVLQRDLQKVLDHRDKVYEQLAKYLQLRNVIERLQEANHSELYMQVDLGCNFFVDTVVPDTSRIYVALGYGFFLELTLAEALKFIDRKSSLLTELSDNLTKDSMNIKAHIHMLLEGLRELQGLQNFPETQH</sequence>
<keyword id="KW-0010">Activator</keyword>
<keyword id="KW-0143">Chaperone</keyword>
<keyword id="KW-0963">Cytoplasm</keyword>
<keyword id="KW-0206">Cytoskeleton</keyword>
<keyword id="KW-0539">Nucleus</keyword>
<keyword id="KW-1185">Reference proteome</keyword>
<keyword id="KW-0678">Repressor</keyword>
<keyword id="KW-0804">Transcription</keyword>
<keyword id="KW-0805">Transcription regulation</keyword>
<organism>
    <name type="scientific">Bos taurus</name>
    <name type="common">Bovine</name>
    <dbReference type="NCBI Taxonomy" id="9913"/>
    <lineage>
        <taxon>Eukaryota</taxon>
        <taxon>Metazoa</taxon>
        <taxon>Chordata</taxon>
        <taxon>Craniata</taxon>
        <taxon>Vertebrata</taxon>
        <taxon>Euteleostomi</taxon>
        <taxon>Mammalia</taxon>
        <taxon>Eutheria</taxon>
        <taxon>Laurasiatheria</taxon>
        <taxon>Artiodactyla</taxon>
        <taxon>Ruminantia</taxon>
        <taxon>Pecora</taxon>
        <taxon>Bovidae</taxon>
        <taxon>Bovinae</taxon>
        <taxon>Bos</taxon>
    </lineage>
</organism>
<protein>
    <recommendedName>
        <fullName>Protein UXT</fullName>
    </recommendedName>
    <alternativeName>
        <fullName>Ubiquitously expressed transcript protein</fullName>
    </alternativeName>
</protein>
<proteinExistence type="evidence at transcript level"/>